<evidence type="ECO:0000255" key="1">
    <source>
        <dbReference type="HAMAP-Rule" id="MF_01537"/>
    </source>
</evidence>
<proteinExistence type="inferred from homology"/>
<comment type="function">
    <text evidence="1">Catalyzes the phosphorolysis of diverse nucleosides, yielding D-ribose 1-phosphate and the respective free bases. Can use uridine, adenosine, guanosine, cytidine, thymidine, inosine and xanthosine as substrates. Also catalyzes the reverse reactions.</text>
</comment>
<comment type="catalytic activity">
    <reaction evidence="1">
        <text>a purine D-ribonucleoside + phosphate = a purine nucleobase + alpha-D-ribose 1-phosphate</text>
        <dbReference type="Rhea" id="RHEA:19805"/>
        <dbReference type="ChEBI" id="CHEBI:26386"/>
        <dbReference type="ChEBI" id="CHEBI:43474"/>
        <dbReference type="ChEBI" id="CHEBI:57720"/>
        <dbReference type="ChEBI" id="CHEBI:142355"/>
        <dbReference type="EC" id="2.4.2.1"/>
    </reaction>
</comment>
<comment type="catalytic activity">
    <reaction evidence="1">
        <text>adenosine + phosphate = alpha-D-ribose 1-phosphate + adenine</text>
        <dbReference type="Rhea" id="RHEA:27642"/>
        <dbReference type="ChEBI" id="CHEBI:16335"/>
        <dbReference type="ChEBI" id="CHEBI:16708"/>
        <dbReference type="ChEBI" id="CHEBI:43474"/>
        <dbReference type="ChEBI" id="CHEBI:57720"/>
        <dbReference type="EC" id="2.4.2.1"/>
    </reaction>
</comment>
<comment type="catalytic activity">
    <reaction evidence="1">
        <text>cytidine + phosphate = cytosine + alpha-D-ribose 1-phosphate</text>
        <dbReference type="Rhea" id="RHEA:52540"/>
        <dbReference type="ChEBI" id="CHEBI:16040"/>
        <dbReference type="ChEBI" id="CHEBI:17562"/>
        <dbReference type="ChEBI" id="CHEBI:43474"/>
        <dbReference type="ChEBI" id="CHEBI:57720"/>
        <dbReference type="EC" id="2.4.2.2"/>
    </reaction>
</comment>
<comment type="catalytic activity">
    <reaction evidence="1">
        <text>guanosine + phosphate = alpha-D-ribose 1-phosphate + guanine</text>
        <dbReference type="Rhea" id="RHEA:13233"/>
        <dbReference type="ChEBI" id="CHEBI:16235"/>
        <dbReference type="ChEBI" id="CHEBI:16750"/>
        <dbReference type="ChEBI" id="CHEBI:43474"/>
        <dbReference type="ChEBI" id="CHEBI:57720"/>
        <dbReference type="EC" id="2.4.2.1"/>
    </reaction>
</comment>
<comment type="catalytic activity">
    <reaction evidence="1">
        <text>inosine + phosphate = alpha-D-ribose 1-phosphate + hypoxanthine</text>
        <dbReference type="Rhea" id="RHEA:27646"/>
        <dbReference type="ChEBI" id="CHEBI:17368"/>
        <dbReference type="ChEBI" id="CHEBI:17596"/>
        <dbReference type="ChEBI" id="CHEBI:43474"/>
        <dbReference type="ChEBI" id="CHEBI:57720"/>
        <dbReference type="EC" id="2.4.2.1"/>
    </reaction>
</comment>
<comment type="catalytic activity">
    <reaction evidence="1">
        <text>thymidine + phosphate = 2-deoxy-alpha-D-ribose 1-phosphate + thymine</text>
        <dbReference type="Rhea" id="RHEA:16037"/>
        <dbReference type="ChEBI" id="CHEBI:17748"/>
        <dbReference type="ChEBI" id="CHEBI:17821"/>
        <dbReference type="ChEBI" id="CHEBI:43474"/>
        <dbReference type="ChEBI" id="CHEBI:57259"/>
        <dbReference type="EC" id="2.4.2.2"/>
    </reaction>
</comment>
<comment type="catalytic activity">
    <reaction evidence="1">
        <text>uridine + phosphate = alpha-D-ribose 1-phosphate + uracil</text>
        <dbReference type="Rhea" id="RHEA:24388"/>
        <dbReference type="ChEBI" id="CHEBI:16704"/>
        <dbReference type="ChEBI" id="CHEBI:17568"/>
        <dbReference type="ChEBI" id="CHEBI:43474"/>
        <dbReference type="ChEBI" id="CHEBI:57720"/>
        <dbReference type="EC" id="2.4.2.2"/>
    </reaction>
</comment>
<comment type="catalytic activity">
    <reaction evidence="1">
        <text>xanthosine + phosphate = alpha-D-ribose 1-phosphate + xanthine</text>
        <dbReference type="Rhea" id="RHEA:27638"/>
        <dbReference type="ChEBI" id="CHEBI:17712"/>
        <dbReference type="ChEBI" id="CHEBI:18107"/>
        <dbReference type="ChEBI" id="CHEBI:43474"/>
        <dbReference type="ChEBI" id="CHEBI:57720"/>
        <dbReference type="EC" id="2.4.2.1"/>
    </reaction>
</comment>
<comment type="similarity">
    <text evidence="1">Belongs to the nucleoside phosphorylase PpnP family.</text>
</comment>
<gene>
    <name evidence="1" type="primary">ppnP</name>
    <name type="ordered locus">Sputcn32_0379</name>
</gene>
<reference key="1">
    <citation type="submission" date="2007-04" db="EMBL/GenBank/DDBJ databases">
        <title>Complete sequence of Shewanella putrefaciens CN-32.</title>
        <authorList>
            <consortium name="US DOE Joint Genome Institute"/>
            <person name="Copeland A."/>
            <person name="Lucas S."/>
            <person name="Lapidus A."/>
            <person name="Barry K."/>
            <person name="Detter J.C."/>
            <person name="Glavina del Rio T."/>
            <person name="Hammon N."/>
            <person name="Israni S."/>
            <person name="Dalin E."/>
            <person name="Tice H."/>
            <person name="Pitluck S."/>
            <person name="Chain P."/>
            <person name="Malfatti S."/>
            <person name="Shin M."/>
            <person name="Vergez L."/>
            <person name="Schmutz J."/>
            <person name="Larimer F."/>
            <person name="Land M."/>
            <person name="Hauser L."/>
            <person name="Kyrpides N."/>
            <person name="Mikhailova N."/>
            <person name="Romine M.F."/>
            <person name="Fredrickson J."/>
            <person name="Tiedje J."/>
            <person name="Richardson P."/>
        </authorList>
    </citation>
    <scope>NUCLEOTIDE SEQUENCE [LARGE SCALE GENOMIC DNA]</scope>
    <source>
        <strain>CN-32 / ATCC BAA-453</strain>
    </source>
</reference>
<accession>A4Y2C8</accession>
<keyword id="KW-0328">Glycosyltransferase</keyword>
<keyword id="KW-0808">Transferase</keyword>
<organism>
    <name type="scientific">Shewanella putrefaciens (strain CN-32 / ATCC BAA-453)</name>
    <dbReference type="NCBI Taxonomy" id="319224"/>
    <lineage>
        <taxon>Bacteria</taxon>
        <taxon>Pseudomonadati</taxon>
        <taxon>Pseudomonadota</taxon>
        <taxon>Gammaproteobacteria</taxon>
        <taxon>Alteromonadales</taxon>
        <taxon>Shewanellaceae</taxon>
        <taxon>Shewanella</taxon>
    </lineage>
</organism>
<protein>
    <recommendedName>
        <fullName evidence="1">Pyrimidine/purine nucleoside phosphorylase</fullName>
        <ecNumber evidence="1">2.4.2.1</ecNumber>
        <ecNumber evidence="1">2.4.2.2</ecNumber>
    </recommendedName>
    <alternativeName>
        <fullName evidence="1">Adenosine phosphorylase</fullName>
    </alternativeName>
    <alternativeName>
        <fullName evidence="1">Cytidine phosphorylase</fullName>
    </alternativeName>
    <alternativeName>
        <fullName evidence="1">Guanosine phosphorylase</fullName>
    </alternativeName>
    <alternativeName>
        <fullName evidence="1">Inosine phosphorylase</fullName>
    </alternativeName>
    <alternativeName>
        <fullName evidence="1">Thymidine phosphorylase</fullName>
    </alternativeName>
    <alternativeName>
        <fullName evidence="1">Uridine phosphorylase</fullName>
    </alternativeName>
    <alternativeName>
        <fullName evidence="1">Xanthosine phosphorylase</fullName>
    </alternativeName>
</protein>
<name>PPNP_SHEPC</name>
<feature type="chain" id="PRO_1000068739" description="Pyrimidine/purine nucleoside phosphorylase">
    <location>
        <begin position="1"/>
        <end position="103"/>
    </location>
</feature>
<dbReference type="EC" id="2.4.2.1" evidence="1"/>
<dbReference type="EC" id="2.4.2.2" evidence="1"/>
<dbReference type="EMBL" id="CP000681">
    <property type="protein sequence ID" value="ABP74111.1"/>
    <property type="molecule type" value="Genomic_DNA"/>
</dbReference>
<dbReference type="SMR" id="A4Y2C8"/>
<dbReference type="STRING" id="319224.Sputcn32_0379"/>
<dbReference type="KEGG" id="spc:Sputcn32_0379"/>
<dbReference type="eggNOG" id="COG3123">
    <property type="taxonomic scope" value="Bacteria"/>
</dbReference>
<dbReference type="HOGENOM" id="CLU_157874_1_0_6"/>
<dbReference type="GO" id="GO:0005829">
    <property type="term" value="C:cytosol"/>
    <property type="evidence" value="ECO:0007669"/>
    <property type="project" value="TreeGrafter"/>
</dbReference>
<dbReference type="GO" id="GO:0047975">
    <property type="term" value="F:guanosine phosphorylase activity"/>
    <property type="evidence" value="ECO:0007669"/>
    <property type="project" value="UniProtKB-EC"/>
</dbReference>
<dbReference type="GO" id="GO:0004731">
    <property type="term" value="F:purine-nucleoside phosphorylase activity"/>
    <property type="evidence" value="ECO:0007669"/>
    <property type="project" value="UniProtKB-UniRule"/>
</dbReference>
<dbReference type="GO" id="GO:0009032">
    <property type="term" value="F:thymidine phosphorylase activity"/>
    <property type="evidence" value="ECO:0007669"/>
    <property type="project" value="UniProtKB-EC"/>
</dbReference>
<dbReference type="GO" id="GO:0004850">
    <property type="term" value="F:uridine phosphorylase activity"/>
    <property type="evidence" value="ECO:0007669"/>
    <property type="project" value="UniProtKB-EC"/>
</dbReference>
<dbReference type="CDD" id="cd20296">
    <property type="entry name" value="cupin_PpnP-like"/>
    <property type="match status" value="1"/>
</dbReference>
<dbReference type="FunFam" id="2.60.120.10:FF:000016">
    <property type="entry name" value="Pyrimidine/purine nucleoside phosphorylase"/>
    <property type="match status" value="1"/>
</dbReference>
<dbReference type="Gene3D" id="2.60.120.10">
    <property type="entry name" value="Jelly Rolls"/>
    <property type="match status" value="1"/>
</dbReference>
<dbReference type="HAMAP" id="MF_01537">
    <property type="entry name" value="Nucleos_phosphorylase_PpnP"/>
    <property type="match status" value="1"/>
</dbReference>
<dbReference type="InterPro" id="IPR009664">
    <property type="entry name" value="Ppnp"/>
</dbReference>
<dbReference type="InterPro" id="IPR014710">
    <property type="entry name" value="RmlC-like_jellyroll"/>
</dbReference>
<dbReference type="InterPro" id="IPR011051">
    <property type="entry name" value="RmlC_Cupin_sf"/>
</dbReference>
<dbReference type="PANTHER" id="PTHR36540">
    <property type="entry name" value="PYRIMIDINE/PURINE NUCLEOSIDE PHOSPHORYLASE"/>
    <property type="match status" value="1"/>
</dbReference>
<dbReference type="PANTHER" id="PTHR36540:SF1">
    <property type="entry name" value="PYRIMIDINE_PURINE NUCLEOSIDE PHOSPHORYLASE"/>
    <property type="match status" value="1"/>
</dbReference>
<dbReference type="Pfam" id="PF06865">
    <property type="entry name" value="Ppnp"/>
    <property type="match status" value="1"/>
</dbReference>
<dbReference type="SUPFAM" id="SSF51182">
    <property type="entry name" value="RmlC-like cupins"/>
    <property type="match status" value="1"/>
</dbReference>
<sequence>MSLLEQVSVSKKANIYFDGKVASRSVFLADGSKQTLGVVLPGEYEFSTSQGEVMEVTSGRFEVLLPESTLWQEFSEGTQFELAANVSFKIRNTAIAEYCCSYL</sequence>